<organism>
    <name type="scientific">Schizosaccharomyces pombe (strain 972 / ATCC 24843)</name>
    <name type="common">Fission yeast</name>
    <dbReference type="NCBI Taxonomy" id="284812"/>
    <lineage>
        <taxon>Eukaryota</taxon>
        <taxon>Fungi</taxon>
        <taxon>Dikarya</taxon>
        <taxon>Ascomycota</taxon>
        <taxon>Taphrinomycotina</taxon>
        <taxon>Schizosaccharomycetes</taxon>
        <taxon>Schizosaccharomycetales</taxon>
        <taxon>Schizosaccharomycetaceae</taxon>
        <taxon>Schizosaccharomyces</taxon>
    </lineage>
</organism>
<keyword id="KW-0963">Cytoplasm</keyword>
<keyword id="KW-0539">Nucleus</keyword>
<keyword id="KW-0653">Protein transport</keyword>
<keyword id="KW-1185">Reference proteome</keyword>
<keyword id="KW-0813">Transport</keyword>
<gene>
    <name type="primary">vps29</name>
    <name type="ORF">SPAC15E1.06</name>
</gene>
<protein>
    <recommendedName>
        <fullName>Vacuolar protein sorting-associated protein 29</fullName>
    </recommendedName>
</protein>
<feature type="chain" id="PRO_0000339646" description="Vacuolar protein sorting-associated protein 29">
    <location>
        <begin position="1"/>
        <end position="187"/>
    </location>
</feature>
<proteinExistence type="inferred from homology"/>
<comment type="function">
    <text evidence="2">Plays a role in vesicular protein sorting. Required for the endosome-to-Golgi retrieval of the vacuolar protein sorting receptor pep1/vps10. Component of the membrane-associated retromer complex which is essential in endosome-to-Golgi retrograde transport. The vps29-vps26-vps35 subcomplex may be involved in cargo selection.</text>
</comment>
<comment type="subunit">
    <text evidence="1 2">Component of the retromer complex which consists of vps29, vps6, vps35, vps5 and vps17 (By similarity). Component of a retromer subcomplex consisting of vps29, vps26 and vps35.</text>
</comment>
<comment type="subcellular location">
    <subcellularLocation>
        <location evidence="3">Cytoplasm</location>
    </subcellularLocation>
    <subcellularLocation>
        <location evidence="3">Nucleus</location>
    </subcellularLocation>
</comment>
<comment type="similarity">
    <text evidence="4">Belongs to the VPS29 family.</text>
</comment>
<evidence type="ECO:0000250" key="1"/>
<evidence type="ECO:0000269" key="2">
    <source>
    </source>
</evidence>
<evidence type="ECO:0000269" key="3">
    <source>
    </source>
</evidence>
<evidence type="ECO:0000305" key="4"/>
<dbReference type="EMBL" id="CU329670">
    <property type="protein sequence ID" value="CAB52425.1"/>
    <property type="molecule type" value="Genomic_DNA"/>
</dbReference>
<dbReference type="PIR" id="T37721">
    <property type="entry name" value="T37721"/>
</dbReference>
<dbReference type="RefSeq" id="NP_594307.1">
    <property type="nucleotide sequence ID" value="NM_001019730.2"/>
</dbReference>
<dbReference type="SMR" id="Q9UTI5"/>
<dbReference type="BioGRID" id="279250">
    <property type="interactions" value="5"/>
</dbReference>
<dbReference type="FunCoup" id="Q9UTI5">
    <property type="interactions" value="621"/>
</dbReference>
<dbReference type="STRING" id="284812.Q9UTI5"/>
<dbReference type="iPTMnet" id="Q9UTI5"/>
<dbReference type="PaxDb" id="4896-SPAC15E1.06.1"/>
<dbReference type="EnsemblFungi" id="SPAC15E1.06.1">
    <property type="protein sequence ID" value="SPAC15E1.06.1:pep"/>
    <property type="gene ID" value="SPAC15E1.06"/>
</dbReference>
<dbReference type="GeneID" id="2542802"/>
<dbReference type="KEGG" id="spo:2542802"/>
<dbReference type="PomBase" id="SPAC15E1.06">
    <property type="gene designation" value="vps29"/>
</dbReference>
<dbReference type="VEuPathDB" id="FungiDB:SPAC15E1.06"/>
<dbReference type="eggNOG" id="KOG3325">
    <property type="taxonomic scope" value="Eukaryota"/>
</dbReference>
<dbReference type="HOGENOM" id="CLU_063749_0_1_1"/>
<dbReference type="InParanoid" id="Q9UTI5"/>
<dbReference type="OMA" id="IHGHQCI"/>
<dbReference type="PhylomeDB" id="Q9UTI5"/>
<dbReference type="Reactome" id="R-SPO-3238698">
    <property type="pathway name" value="WNT ligand biogenesis and trafficking"/>
</dbReference>
<dbReference type="PRO" id="PR:Q9UTI5"/>
<dbReference type="Proteomes" id="UP000002485">
    <property type="component" value="Chromosome I"/>
</dbReference>
<dbReference type="GO" id="GO:0005829">
    <property type="term" value="C:cytosol"/>
    <property type="evidence" value="ECO:0007005"/>
    <property type="project" value="PomBase"/>
</dbReference>
<dbReference type="GO" id="GO:0005768">
    <property type="term" value="C:endosome"/>
    <property type="evidence" value="ECO:0000315"/>
    <property type="project" value="PomBase"/>
</dbReference>
<dbReference type="GO" id="GO:0005634">
    <property type="term" value="C:nucleus"/>
    <property type="evidence" value="ECO:0007005"/>
    <property type="project" value="PomBase"/>
</dbReference>
<dbReference type="GO" id="GO:0030904">
    <property type="term" value="C:retromer complex"/>
    <property type="evidence" value="ECO:0000315"/>
    <property type="project" value="PomBase"/>
</dbReference>
<dbReference type="GO" id="GO:0006886">
    <property type="term" value="P:intracellular protein transport"/>
    <property type="evidence" value="ECO:0000315"/>
    <property type="project" value="PomBase"/>
</dbReference>
<dbReference type="GO" id="GO:0042147">
    <property type="term" value="P:retrograde transport, endosome to Golgi"/>
    <property type="evidence" value="ECO:0000315"/>
    <property type="project" value="PomBase"/>
</dbReference>
<dbReference type="CDD" id="cd07394">
    <property type="entry name" value="MPP_Vps29"/>
    <property type="match status" value="1"/>
</dbReference>
<dbReference type="FunFam" id="3.60.21.10:FF:000015">
    <property type="entry name" value="Vacuolar protein sorting-associated protein 29"/>
    <property type="match status" value="1"/>
</dbReference>
<dbReference type="Gene3D" id="3.60.21.10">
    <property type="match status" value="1"/>
</dbReference>
<dbReference type="InterPro" id="IPR024654">
    <property type="entry name" value="Calcineurin-like_PHP_lpxH"/>
</dbReference>
<dbReference type="InterPro" id="IPR029052">
    <property type="entry name" value="Metallo-depent_PP-like"/>
</dbReference>
<dbReference type="InterPro" id="IPR000979">
    <property type="entry name" value="Phosphodiesterase_MJ0936/Vps29"/>
</dbReference>
<dbReference type="InterPro" id="IPR028661">
    <property type="entry name" value="Vps29"/>
</dbReference>
<dbReference type="NCBIfam" id="TIGR00040">
    <property type="entry name" value="yfcE"/>
    <property type="match status" value="1"/>
</dbReference>
<dbReference type="PANTHER" id="PTHR11124">
    <property type="entry name" value="VACUOLAR SORTING PROTEIN VPS29"/>
    <property type="match status" value="1"/>
</dbReference>
<dbReference type="Pfam" id="PF12850">
    <property type="entry name" value="Metallophos_2"/>
    <property type="match status" value="1"/>
</dbReference>
<dbReference type="SUPFAM" id="SSF56300">
    <property type="entry name" value="Metallo-dependent phosphatases"/>
    <property type="match status" value="1"/>
</dbReference>
<accession>Q9UTI5</accession>
<name>VPS29_SCHPO</name>
<reference key="1">
    <citation type="journal article" date="2002" name="Nature">
        <title>The genome sequence of Schizosaccharomyces pombe.</title>
        <authorList>
            <person name="Wood V."/>
            <person name="Gwilliam R."/>
            <person name="Rajandream M.A."/>
            <person name="Lyne M.H."/>
            <person name="Lyne R."/>
            <person name="Stewart A."/>
            <person name="Sgouros J.G."/>
            <person name="Peat N."/>
            <person name="Hayles J."/>
            <person name="Baker S.G."/>
            <person name="Basham D."/>
            <person name="Bowman S."/>
            <person name="Brooks K."/>
            <person name="Brown D."/>
            <person name="Brown S."/>
            <person name="Chillingworth T."/>
            <person name="Churcher C.M."/>
            <person name="Collins M."/>
            <person name="Connor R."/>
            <person name="Cronin A."/>
            <person name="Davis P."/>
            <person name="Feltwell T."/>
            <person name="Fraser A."/>
            <person name="Gentles S."/>
            <person name="Goble A."/>
            <person name="Hamlin N."/>
            <person name="Harris D.E."/>
            <person name="Hidalgo J."/>
            <person name="Hodgson G."/>
            <person name="Holroyd S."/>
            <person name="Hornsby T."/>
            <person name="Howarth S."/>
            <person name="Huckle E.J."/>
            <person name="Hunt S."/>
            <person name="Jagels K."/>
            <person name="James K.D."/>
            <person name="Jones L."/>
            <person name="Jones M."/>
            <person name="Leather S."/>
            <person name="McDonald S."/>
            <person name="McLean J."/>
            <person name="Mooney P."/>
            <person name="Moule S."/>
            <person name="Mungall K.L."/>
            <person name="Murphy L.D."/>
            <person name="Niblett D."/>
            <person name="Odell C."/>
            <person name="Oliver K."/>
            <person name="O'Neil S."/>
            <person name="Pearson D."/>
            <person name="Quail M.A."/>
            <person name="Rabbinowitsch E."/>
            <person name="Rutherford K.M."/>
            <person name="Rutter S."/>
            <person name="Saunders D."/>
            <person name="Seeger K."/>
            <person name="Sharp S."/>
            <person name="Skelton J."/>
            <person name="Simmonds M.N."/>
            <person name="Squares R."/>
            <person name="Squares S."/>
            <person name="Stevens K."/>
            <person name="Taylor K."/>
            <person name="Taylor R.G."/>
            <person name="Tivey A."/>
            <person name="Walsh S.V."/>
            <person name="Warren T."/>
            <person name="Whitehead S."/>
            <person name="Woodward J.R."/>
            <person name="Volckaert G."/>
            <person name="Aert R."/>
            <person name="Robben J."/>
            <person name="Grymonprez B."/>
            <person name="Weltjens I."/>
            <person name="Vanstreels E."/>
            <person name="Rieger M."/>
            <person name="Schaefer M."/>
            <person name="Mueller-Auer S."/>
            <person name="Gabel C."/>
            <person name="Fuchs M."/>
            <person name="Duesterhoeft A."/>
            <person name="Fritzc C."/>
            <person name="Holzer E."/>
            <person name="Moestl D."/>
            <person name="Hilbert H."/>
            <person name="Borzym K."/>
            <person name="Langer I."/>
            <person name="Beck A."/>
            <person name="Lehrach H."/>
            <person name="Reinhardt R."/>
            <person name="Pohl T.M."/>
            <person name="Eger P."/>
            <person name="Zimmermann W."/>
            <person name="Wedler H."/>
            <person name="Wambutt R."/>
            <person name="Purnelle B."/>
            <person name="Goffeau A."/>
            <person name="Cadieu E."/>
            <person name="Dreano S."/>
            <person name="Gloux S."/>
            <person name="Lelaure V."/>
            <person name="Mottier S."/>
            <person name="Galibert F."/>
            <person name="Aves S.J."/>
            <person name="Xiang Z."/>
            <person name="Hunt C."/>
            <person name="Moore K."/>
            <person name="Hurst S.M."/>
            <person name="Lucas M."/>
            <person name="Rochet M."/>
            <person name="Gaillardin C."/>
            <person name="Tallada V.A."/>
            <person name="Garzon A."/>
            <person name="Thode G."/>
            <person name="Daga R.R."/>
            <person name="Cruzado L."/>
            <person name="Jimenez J."/>
            <person name="Sanchez M."/>
            <person name="del Rey F."/>
            <person name="Benito J."/>
            <person name="Dominguez A."/>
            <person name="Revuelta J.L."/>
            <person name="Moreno S."/>
            <person name="Armstrong J."/>
            <person name="Forsburg S.L."/>
            <person name="Cerutti L."/>
            <person name="Lowe T."/>
            <person name="McCombie W.R."/>
            <person name="Paulsen I."/>
            <person name="Potashkin J."/>
            <person name="Shpakovski G.V."/>
            <person name="Ussery D."/>
            <person name="Barrell B.G."/>
            <person name="Nurse P."/>
        </authorList>
    </citation>
    <scope>NUCLEOTIDE SEQUENCE [LARGE SCALE GENOMIC DNA]</scope>
    <source>
        <strain>972 / ATCC 24843</strain>
    </source>
</reference>
<reference key="2">
    <citation type="journal article" date="2006" name="Microbiology">
        <title>Vacuolar protein sorting receptor in Schizosaccharomyces pombe.</title>
        <authorList>
            <person name="Iwaki T."/>
            <person name="Hosomi A."/>
            <person name="Tokudomi S."/>
            <person name="Kusunoki Y."/>
            <person name="Fujita Y."/>
            <person name="Giga-Hama Y."/>
            <person name="Tanaka N."/>
            <person name="Takegawa K."/>
        </authorList>
    </citation>
    <scope>FUNCTION</scope>
    <scope>IDENTIFICATION IN THE VPS29-VPS26-VPS35 RETROMER SUBCOMPLEX</scope>
</reference>
<reference key="3">
    <citation type="journal article" date="2006" name="Nat. Biotechnol.">
        <title>ORFeome cloning and global analysis of protein localization in the fission yeast Schizosaccharomyces pombe.</title>
        <authorList>
            <person name="Matsuyama A."/>
            <person name="Arai R."/>
            <person name="Yashiroda Y."/>
            <person name="Shirai A."/>
            <person name="Kamata A."/>
            <person name="Sekido S."/>
            <person name="Kobayashi Y."/>
            <person name="Hashimoto A."/>
            <person name="Hamamoto M."/>
            <person name="Hiraoka Y."/>
            <person name="Horinouchi S."/>
            <person name="Yoshida M."/>
        </authorList>
    </citation>
    <scope>SUBCELLULAR LOCATION [LARGE SCALE ANALYSIS]</scope>
</reference>
<sequence>MLVLVIGDFHIPDRAPKLSEKFRQLLIPGKISQIICLGNLTSTSVYEYLKHVCSDLKLVKGAFDISSKAPIAGKITLGSFKIGYTNGHLVVPQDSPEALSILAREMDADILLFGGTHKFAAYELDGCFFVNPGSATGAPNVSAVEDDEKIVPSFVLMDVQGAVLILYVYRIFDGEVRVEKMQYRKPE</sequence>